<reference key="1">
    <citation type="journal article" date="2004" name="Nucleic Acids Res.">
        <title>Thermoadaptation trait revealed by the genome sequence of thermophilic Geobacillus kaustophilus.</title>
        <authorList>
            <person name="Takami H."/>
            <person name="Takaki Y."/>
            <person name="Chee G.-J."/>
            <person name="Nishi S."/>
            <person name="Shimamura S."/>
            <person name="Suzuki H."/>
            <person name="Matsui S."/>
            <person name="Uchiyama I."/>
        </authorList>
    </citation>
    <scope>NUCLEOTIDE SEQUENCE [LARGE SCALE GENOMIC DNA]</scope>
    <source>
        <strain>HTA426</strain>
    </source>
</reference>
<accession>Q5L3Z6</accession>
<name>RL4_GEOKA</name>
<feature type="chain" id="PRO_0000242378" description="Large ribosomal subunit protein uL4">
    <location>
        <begin position="1"/>
        <end position="207"/>
    </location>
</feature>
<feature type="region of interest" description="Disordered" evidence="2">
    <location>
        <begin position="44"/>
        <end position="78"/>
    </location>
</feature>
<protein>
    <recommendedName>
        <fullName evidence="1">Large ribosomal subunit protein uL4</fullName>
    </recommendedName>
    <alternativeName>
        <fullName evidence="3">50S ribosomal protein L4</fullName>
    </alternativeName>
</protein>
<organism>
    <name type="scientific">Geobacillus kaustophilus (strain HTA426)</name>
    <dbReference type="NCBI Taxonomy" id="235909"/>
    <lineage>
        <taxon>Bacteria</taxon>
        <taxon>Bacillati</taxon>
        <taxon>Bacillota</taxon>
        <taxon>Bacilli</taxon>
        <taxon>Bacillales</taxon>
        <taxon>Anoxybacillaceae</taxon>
        <taxon>Geobacillus</taxon>
        <taxon>Geobacillus thermoleovorans group</taxon>
    </lineage>
</organism>
<proteinExistence type="inferred from homology"/>
<sequence length="207" mass="22784">MPKVALYNQNGQTVGEIELNDAVFGIEPNKHVLFEAVIMQRASMRQGTHKTKNRAEVSGGGRKPWRQKGTGRARQGSIRAPQWRGGGTVFGPVPRSYSYKLPKKVRRLAIKSALSSKVLENDIVVLDQLSLEAPKTKEMVKILNNLSVDRKALIVTDELNENVYLSARNIPGVKVVAANGINVLDVLNHDKLVITKAAVEKVEEVLA</sequence>
<keyword id="KW-1185">Reference proteome</keyword>
<keyword id="KW-0687">Ribonucleoprotein</keyword>
<keyword id="KW-0689">Ribosomal protein</keyword>
<keyword id="KW-0694">RNA-binding</keyword>
<keyword id="KW-0699">rRNA-binding</keyword>
<dbReference type="EMBL" id="BA000043">
    <property type="protein sequence ID" value="BAD74392.1"/>
    <property type="molecule type" value="Genomic_DNA"/>
</dbReference>
<dbReference type="RefSeq" id="WP_011229621.1">
    <property type="nucleotide sequence ID" value="NC_006510.1"/>
</dbReference>
<dbReference type="SMR" id="Q5L3Z6"/>
<dbReference type="STRING" id="235909.GK0107"/>
<dbReference type="GeneID" id="32062095"/>
<dbReference type="KEGG" id="gka:GK0107"/>
<dbReference type="eggNOG" id="COG0088">
    <property type="taxonomic scope" value="Bacteria"/>
</dbReference>
<dbReference type="HOGENOM" id="CLU_041575_5_2_9"/>
<dbReference type="Proteomes" id="UP000001172">
    <property type="component" value="Chromosome"/>
</dbReference>
<dbReference type="GO" id="GO:1990904">
    <property type="term" value="C:ribonucleoprotein complex"/>
    <property type="evidence" value="ECO:0007669"/>
    <property type="project" value="UniProtKB-KW"/>
</dbReference>
<dbReference type="GO" id="GO:0005840">
    <property type="term" value="C:ribosome"/>
    <property type="evidence" value="ECO:0007669"/>
    <property type="project" value="UniProtKB-KW"/>
</dbReference>
<dbReference type="GO" id="GO:0019843">
    <property type="term" value="F:rRNA binding"/>
    <property type="evidence" value="ECO:0007669"/>
    <property type="project" value="UniProtKB-UniRule"/>
</dbReference>
<dbReference type="GO" id="GO:0003735">
    <property type="term" value="F:structural constituent of ribosome"/>
    <property type="evidence" value="ECO:0007669"/>
    <property type="project" value="InterPro"/>
</dbReference>
<dbReference type="GO" id="GO:0006412">
    <property type="term" value="P:translation"/>
    <property type="evidence" value="ECO:0007669"/>
    <property type="project" value="UniProtKB-UniRule"/>
</dbReference>
<dbReference type="FunFam" id="3.40.1370.10:FF:000003">
    <property type="entry name" value="50S ribosomal protein L4"/>
    <property type="match status" value="1"/>
</dbReference>
<dbReference type="Gene3D" id="3.40.1370.10">
    <property type="match status" value="1"/>
</dbReference>
<dbReference type="HAMAP" id="MF_01328_B">
    <property type="entry name" value="Ribosomal_uL4_B"/>
    <property type="match status" value="1"/>
</dbReference>
<dbReference type="InterPro" id="IPR002136">
    <property type="entry name" value="Ribosomal_uL4"/>
</dbReference>
<dbReference type="InterPro" id="IPR013005">
    <property type="entry name" value="Ribosomal_uL4-like"/>
</dbReference>
<dbReference type="InterPro" id="IPR023574">
    <property type="entry name" value="Ribosomal_uL4_dom_sf"/>
</dbReference>
<dbReference type="NCBIfam" id="TIGR03953">
    <property type="entry name" value="rplD_bact"/>
    <property type="match status" value="1"/>
</dbReference>
<dbReference type="PANTHER" id="PTHR10746">
    <property type="entry name" value="50S RIBOSOMAL PROTEIN L4"/>
    <property type="match status" value="1"/>
</dbReference>
<dbReference type="PANTHER" id="PTHR10746:SF6">
    <property type="entry name" value="LARGE RIBOSOMAL SUBUNIT PROTEIN UL4M"/>
    <property type="match status" value="1"/>
</dbReference>
<dbReference type="Pfam" id="PF00573">
    <property type="entry name" value="Ribosomal_L4"/>
    <property type="match status" value="1"/>
</dbReference>
<dbReference type="SUPFAM" id="SSF52166">
    <property type="entry name" value="Ribosomal protein L4"/>
    <property type="match status" value="1"/>
</dbReference>
<evidence type="ECO:0000255" key="1">
    <source>
        <dbReference type="HAMAP-Rule" id="MF_01328"/>
    </source>
</evidence>
<evidence type="ECO:0000256" key="2">
    <source>
        <dbReference type="SAM" id="MobiDB-lite"/>
    </source>
</evidence>
<evidence type="ECO:0000305" key="3"/>
<gene>
    <name evidence="1" type="primary">rplD</name>
    <name type="ordered locus">GK0107</name>
</gene>
<comment type="function">
    <text evidence="1">One of the primary rRNA binding proteins, this protein initially binds near the 5'-end of the 23S rRNA. It is important during the early stages of 50S assembly. It makes multiple contacts with different domains of the 23S rRNA in the assembled 50S subunit and ribosome.</text>
</comment>
<comment type="function">
    <text evidence="1">Forms part of the polypeptide exit tunnel.</text>
</comment>
<comment type="subunit">
    <text evidence="1">Part of the 50S ribosomal subunit.</text>
</comment>
<comment type="similarity">
    <text evidence="1">Belongs to the universal ribosomal protein uL4 family.</text>
</comment>